<dbReference type="EC" id="3.2.2.23" evidence="2"/>
<dbReference type="EC" id="4.2.99.18" evidence="2"/>
<dbReference type="EMBL" id="CP000024">
    <property type="protein sequence ID" value="AAV62216.1"/>
    <property type="molecule type" value="Genomic_DNA"/>
</dbReference>
<dbReference type="RefSeq" id="WP_011227010.1">
    <property type="nucleotide sequence ID" value="NC_006449.1"/>
</dbReference>
<dbReference type="SMR" id="Q5M0P0"/>
<dbReference type="KEGG" id="stc:str0620"/>
<dbReference type="HOGENOM" id="CLU_038423_1_2_9"/>
<dbReference type="GO" id="GO:0034039">
    <property type="term" value="F:8-oxo-7,8-dihydroguanine DNA N-glycosylase activity"/>
    <property type="evidence" value="ECO:0007669"/>
    <property type="project" value="TreeGrafter"/>
</dbReference>
<dbReference type="GO" id="GO:0140078">
    <property type="term" value="F:class I DNA-(apurinic or apyrimidinic site) endonuclease activity"/>
    <property type="evidence" value="ECO:0007669"/>
    <property type="project" value="UniProtKB-EC"/>
</dbReference>
<dbReference type="GO" id="GO:0003684">
    <property type="term" value="F:damaged DNA binding"/>
    <property type="evidence" value="ECO:0007669"/>
    <property type="project" value="InterPro"/>
</dbReference>
<dbReference type="GO" id="GO:0008270">
    <property type="term" value="F:zinc ion binding"/>
    <property type="evidence" value="ECO:0007669"/>
    <property type="project" value="UniProtKB-UniRule"/>
</dbReference>
<dbReference type="GO" id="GO:0006284">
    <property type="term" value="P:base-excision repair"/>
    <property type="evidence" value="ECO:0007669"/>
    <property type="project" value="InterPro"/>
</dbReference>
<dbReference type="CDD" id="cd08966">
    <property type="entry name" value="EcFpg-like_N"/>
    <property type="match status" value="1"/>
</dbReference>
<dbReference type="FunFam" id="1.10.8.50:FF:000003">
    <property type="entry name" value="Formamidopyrimidine-DNA glycosylase"/>
    <property type="match status" value="1"/>
</dbReference>
<dbReference type="FunFam" id="3.20.190.10:FF:000001">
    <property type="entry name" value="Formamidopyrimidine-DNA glycosylase"/>
    <property type="match status" value="1"/>
</dbReference>
<dbReference type="Gene3D" id="1.10.8.50">
    <property type="match status" value="1"/>
</dbReference>
<dbReference type="Gene3D" id="3.20.190.10">
    <property type="entry name" value="MutM-like, N-terminal"/>
    <property type="match status" value="1"/>
</dbReference>
<dbReference type="HAMAP" id="MF_00103">
    <property type="entry name" value="Fapy_DNA_glycosyl"/>
    <property type="match status" value="1"/>
</dbReference>
<dbReference type="InterPro" id="IPR015886">
    <property type="entry name" value="DNA_glyclase/AP_lyase_DNA-bd"/>
</dbReference>
<dbReference type="InterPro" id="IPR015887">
    <property type="entry name" value="DNA_glyclase_Znf_dom_DNA_BS"/>
</dbReference>
<dbReference type="InterPro" id="IPR020629">
    <property type="entry name" value="Formamido-pyr_DNA_Glyclase"/>
</dbReference>
<dbReference type="InterPro" id="IPR012319">
    <property type="entry name" value="FPG_cat"/>
</dbReference>
<dbReference type="InterPro" id="IPR035937">
    <property type="entry name" value="MutM-like_N-ter"/>
</dbReference>
<dbReference type="InterPro" id="IPR010979">
    <property type="entry name" value="Ribosomal_uS13-like_H2TH"/>
</dbReference>
<dbReference type="InterPro" id="IPR000214">
    <property type="entry name" value="Znf_DNA_glyclase/AP_lyase"/>
</dbReference>
<dbReference type="InterPro" id="IPR010663">
    <property type="entry name" value="Znf_FPG/IleRS"/>
</dbReference>
<dbReference type="NCBIfam" id="TIGR00577">
    <property type="entry name" value="fpg"/>
    <property type="match status" value="1"/>
</dbReference>
<dbReference type="NCBIfam" id="NF002211">
    <property type="entry name" value="PRK01103.1"/>
    <property type="match status" value="1"/>
</dbReference>
<dbReference type="PANTHER" id="PTHR22993">
    <property type="entry name" value="FORMAMIDOPYRIMIDINE-DNA GLYCOSYLASE"/>
    <property type="match status" value="1"/>
</dbReference>
<dbReference type="PANTHER" id="PTHR22993:SF9">
    <property type="entry name" value="FORMAMIDOPYRIMIDINE-DNA GLYCOSYLASE"/>
    <property type="match status" value="1"/>
</dbReference>
<dbReference type="Pfam" id="PF01149">
    <property type="entry name" value="Fapy_DNA_glyco"/>
    <property type="match status" value="1"/>
</dbReference>
<dbReference type="Pfam" id="PF06831">
    <property type="entry name" value="H2TH"/>
    <property type="match status" value="1"/>
</dbReference>
<dbReference type="Pfam" id="PF06827">
    <property type="entry name" value="zf-FPG_IleRS"/>
    <property type="match status" value="1"/>
</dbReference>
<dbReference type="SMART" id="SM00898">
    <property type="entry name" value="Fapy_DNA_glyco"/>
    <property type="match status" value="1"/>
</dbReference>
<dbReference type="SMART" id="SM01232">
    <property type="entry name" value="H2TH"/>
    <property type="match status" value="1"/>
</dbReference>
<dbReference type="SUPFAM" id="SSF57716">
    <property type="entry name" value="Glucocorticoid receptor-like (DNA-binding domain)"/>
    <property type="match status" value="1"/>
</dbReference>
<dbReference type="SUPFAM" id="SSF81624">
    <property type="entry name" value="N-terminal domain of MutM-like DNA repair proteins"/>
    <property type="match status" value="1"/>
</dbReference>
<dbReference type="SUPFAM" id="SSF46946">
    <property type="entry name" value="S13-like H2TH domain"/>
    <property type="match status" value="1"/>
</dbReference>
<dbReference type="PROSITE" id="PS51068">
    <property type="entry name" value="FPG_CAT"/>
    <property type="match status" value="1"/>
</dbReference>
<dbReference type="PROSITE" id="PS01242">
    <property type="entry name" value="ZF_FPG_1"/>
    <property type="match status" value="1"/>
</dbReference>
<dbReference type="PROSITE" id="PS51066">
    <property type="entry name" value="ZF_FPG_2"/>
    <property type="match status" value="1"/>
</dbReference>
<organism>
    <name type="scientific">Streptococcus thermophilus (strain CNRZ 1066)</name>
    <dbReference type="NCBI Taxonomy" id="299768"/>
    <lineage>
        <taxon>Bacteria</taxon>
        <taxon>Bacillati</taxon>
        <taxon>Bacillota</taxon>
        <taxon>Bacilli</taxon>
        <taxon>Lactobacillales</taxon>
        <taxon>Streptococcaceae</taxon>
        <taxon>Streptococcus</taxon>
    </lineage>
</organism>
<reference key="1">
    <citation type="journal article" date="2004" name="Nat. Biotechnol.">
        <title>Complete sequence and comparative genome analysis of the dairy bacterium Streptococcus thermophilus.</title>
        <authorList>
            <person name="Bolotin A."/>
            <person name="Quinquis B."/>
            <person name="Renault P."/>
            <person name="Sorokin A."/>
            <person name="Ehrlich S.D."/>
            <person name="Kulakauskas S."/>
            <person name="Lapidus A."/>
            <person name="Goltsman E."/>
            <person name="Mazur M."/>
            <person name="Pusch G.D."/>
            <person name="Fonstein M."/>
            <person name="Overbeek R."/>
            <person name="Kyprides N."/>
            <person name="Purnelle B."/>
            <person name="Prozzi D."/>
            <person name="Ngui K."/>
            <person name="Masuy D."/>
            <person name="Hancy F."/>
            <person name="Burteau S."/>
            <person name="Boutry M."/>
            <person name="Delcour J."/>
            <person name="Goffeau A."/>
            <person name="Hols P."/>
        </authorList>
    </citation>
    <scope>NUCLEOTIDE SEQUENCE [LARGE SCALE GENOMIC DNA]</scope>
    <source>
        <strain>CNRZ 1066</strain>
    </source>
</reference>
<evidence type="ECO:0000250" key="1"/>
<evidence type="ECO:0000255" key="2">
    <source>
        <dbReference type="HAMAP-Rule" id="MF_00103"/>
    </source>
</evidence>
<protein>
    <recommendedName>
        <fullName evidence="2">Formamidopyrimidine-DNA glycosylase</fullName>
        <shortName evidence="2">Fapy-DNA glycosylase</shortName>
        <ecNumber evidence="2">3.2.2.23</ecNumber>
    </recommendedName>
    <alternativeName>
        <fullName evidence="2">DNA-(apurinic or apyrimidinic site) lyase MutM</fullName>
        <shortName evidence="2">AP lyase MutM</shortName>
        <ecNumber evidence="2">4.2.99.18</ecNumber>
    </alternativeName>
</protein>
<keyword id="KW-0227">DNA damage</keyword>
<keyword id="KW-0234">DNA repair</keyword>
<keyword id="KW-0238">DNA-binding</keyword>
<keyword id="KW-0326">Glycosidase</keyword>
<keyword id="KW-0378">Hydrolase</keyword>
<keyword id="KW-0456">Lyase</keyword>
<keyword id="KW-0479">Metal-binding</keyword>
<keyword id="KW-0511">Multifunctional enzyme</keyword>
<keyword id="KW-0862">Zinc</keyword>
<keyword id="KW-0863">Zinc-finger</keyword>
<accession>Q5M0P0</accession>
<comment type="function">
    <text evidence="2">Involved in base excision repair of DNA damaged by oxidation or by mutagenic agents. Acts as a DNA glycosylase that recognizes and removes damaged bases. Has a preference for oxidized purines, such as 7,8-dihydro-8-oxoguanine (8-oxoG). Has AP (apurinic/apyrimidinic) lyase activity and introduces nicks in the DNA strand. Cleaves the DNA backbone by beta-delta elimination to generate a single-strand break at the site of the removed base with both 3'- and 5'-phosphates.</text>
</comment>
<comment type="catalytic activity">
    <reaction evidence="2">
        <text>Hydrolysis of DNA containing ring-opened 7-methylguanine residues, releasing 2,6-diamino-4-hydroxy-5-(N-methyl)formamidopyrimidine.</text>
        <dbReference type="EC" id="3.2.2.23"/>
    </reaction>
</comment>
<comment type="catalytic activity">
    <reaction evidence="2">
        <text>2'-deoxyribonucleotide-(2'-deoxyribose 5'-phosphate)-2'-deoxyribonucleotide-DNA = a 3'-end 2'-deoxyribonucleotide-(2,3-dehydro-2,3-deoxyribose 5'-phosphate)-DNA + a 5'-end 5'-phospho-2'-deoxyribonucleoside-DNA + H(+)</text>
        <dbReference type="Rhea" id="RHEA:66592"/>
        <dbReference type="Rhea" id="RHEA-COMP:13180"/>
        <dbReference type="Rhea" id="RHEA-COMP:16897"/>
        <dbReference type="Rhea" id="RHEA-COMP:17067"/>
        <dbReference type="ChEBI" id="CHEBI:15378"/>
        <dbReference type="ChEBI" id="CHEBI:136412"/>
        <dbReference type="ChEBI" id="CHEBI:157695"/>
        <dbReference type="ChEBI" id="CHEBI:167181"/>
        <dbReference type="EC" id="4.2.99.18"/>
    </reaction>
</comment>
<comment type="cofactor">
    <cofactor evidence="2">
        <name>Zn(2+)</name>
        <dbReference type="ChEBI" id="CHEBI:29105"/>
    </cofactor>
    <text evidence="2">Binds 1 zinc ion per subunit.</text>
</comment>
<comment type="subunit">
    <text evidence="2">Monomer.</text>
</comment>
<comment type="similarity">
    <text evidence="2">Belongs to the FPG family.</text>
</comment>
<name>FPG_STRT1</name>
<gene>
    <name evidence="2" type="primary">mutM</name>
    <name evidence="2" type="synonym">fpg</name>
    <name type="ordered locus">str0620</name>
</gene>
<sequence length="273" mass="31115">MPELPEVETVRRGLEKLLLGRTILSLEVKVPKMIKTSYDSFLHDLPGQTIQAMRRRGKYLIFDFGQLIIISHLRMEGKYLLFTDQVPDNKHFHLFFKLDDGSTLVYQDVRKFGTFDLLDRKQEEAYFTRKELGPEPTKKTFKYVPFERALMHSGKSIKPLLLEQKLVAGLGNIYVDEVLWAAKVHPETPANKLSKAAMKRVHDQTIAILQLGIAKGGSTIRTYRNALGEDGTMQNYLQVYGKTGQPCPRCASMIVKIKLGGRGTHLCPHCQKR</sequence>
<proteinExistence type="inferred from homology"/>
<feature type="initiator methionine" description="Removed" evidence="1">
    <location>
        <position position="1"/>
    </location>
</feature>
<feature type="chain" id="PRO_0000228476" description="Formamidopyrimidine-DNA glycosylase">
    <location>
        <begin position="2"/>
        <end position="273"/>
    </location>
</feature>
<feature type="zinc finger region" description="FPG-type" evidence="2">
    <location>
        <begin position="238"/>
        <end position="272"/>
    </location>
</feature>
<feature type="active site" description="Schiff-base intermediate with DNA" evidence="2">
    <location>
        <position position="2"/>
    </location>
</feature>
<feature type="active site" description="Proton donor" evidence="2">
    <location>
        <position position="3"/>
    </location>
</feature>
<feature type="active site" description="Proton donor; for beta-elimination activity" evidence="2">
    <location>
        <position position="58"/>
    </location>
</feature>
<feature type="active site" description="Proton donor; for delta-elimination activity" evidence="2">
    <location>
        <position position="262"/>
    </location>
</feature>
<feature type="binding site" evidence="2">
    <location>
        <position position="91"/>
    </location>
    <ligand>
        <name>DNA</name>
        <dbReference type="ChEBI" id="CHEBI:16991"/>
    </ligand>
</feature>
<feature type="binding site" evidence="2">
    <location>
        <position position="110"/>
    </location>
    <ligand>
        <name>DNA</name>
        <dbReference type="ChEBI" id="CHEBI:16991"/>
    </ligand>
</feature>